<dbReference type="EC" id="2.7.11.1"/>
<dbReference type="EMBL" id="AB010075">
    <property type="protein sequence ID" value="BAB10677.1"/>
    <property type="molecule type" value="Genomic_DNA"/>
</dbReference>
<dbReference type="EMBL" id="AL021684">
    <property type="protein sequence ID" value="CAA16688.1"/>
    <property type="molecule type" value="Genomic_DNA"/>
</dbReference>
<dbReference type="EMBL" id="CP002688">
    <property type="protein sequence ID" value="AED98091.1"/>
    <property type="molecule type" value="Genomic_DNA"/>
</dbReference>
<dbReference type="EMBL" id="CP002688">
    <property type="protein sequence ID" value="AED98092.1"/>
    <property type="molecule type" value="Genomic_DNA"/>
</dbReference>
<dbReference type="EMBL" id="AY099814">
    <property type="protein sequence ID" value="AAM20665.1"/>
    <property type="molecule type" value="mRNA"/>
</dbReference>
<dbReference type="EMBL" id="BT008810">
    <property type="protein sequence ID" value="AAP68249.1"/>
    <property type="molecule type" value="mRNA"/>
</dbReference>
<dbReference type="EMBL" id="FJ708816">
    <property type="protein sequence ID" value="ACN59407.1"/>
    <property type="molecule type" value="mRNA"/>
</dbReference>
<dbReference type="EMBL" id="AK226485">
    <property type="protein sequence ID" value="BAE98627.1"/>
    <property type="molecule type" value="mRNA"/>
</dbReference>
<dbReference type="PIR" id="T05898">
    <property type="entry name" value="T05898"/>
</dbReference>
<dbReference type="RefSeq" id="NP_001190624.1">
    <property type="nucleotide sequence ID" value="NM_001203695.1"/>
</dbReference>
<dbReference type="RefSeq" id="NP_201371.1">
    <property type="nucleotide sequence ID" value="NM_125967.5"/>
</dbReference>
<dbReference type="SMR" id="O49545"/>
<dbReference type="BioGRID" id="21941">
    <property type="interactions" value="88"/>
</dbReference>
<dbReference type="FunCoup" id="O49545">
    <property type="interactions" value="1897"/>
</dbReference>
<dbReference type="IntAct" id="O49545">
    <property type="interactions" value="90"/>
</dbReference>
<dbReference type="STRING" id="3702.O49545"/>
<dbReference type="GlyCosmos" id="O49545">
    <property type="glycosylation" value="15 sites, No reported glycans"/>
</dbReference>
<dbReference type="GlyGen" id="O49545">
    <property type="glycosylation" value="15 sites"/>
</dbReference>
<dbReference type="iPTMnet" id="O49545"/>
<dbReference type="PaxDb" id="3702-AT5G65700.2"/>
<dbReference type="ProteomicsDB" id="241122"/>
<dbReference type="EnsemblPlants" id="AT5G65700.1">
    <property type="protein sequence ID" value="AT5G65700.1"/>
    <property type="gene ID" value="AT5G65700"/>
</dbReference>
<dbReference type="EnsemblPlants" id="AT5G65700.2">
    <property type="protein sequence ID" value="AT5G65700.2"/>
    <property type="gene ID" value="AT5G65700"/>
</dbReference>
<dbReference type="GeneID" id="836699"/>
<dbReference type="Gramene" id="AT5G65700.1">
    <property type="protein sequence ID" value="AT5G65700.1"/>
    <property type="gene ID" value="AT5G65700"/>
</dbReference>
<dbReference type="Gramene" id="AT5G65700.2">
    <property type="protein sequence ID" value="AT5G65700.2"/>
    <property type="gene ID" value="AT5G65700"/>
</dbReference>
<dbReference type="KEGG" id="ath:AT5G65700"/>
<dbReference type="Araport" id="AT5G65700"/>
<dbReference type="TAIR" id="AT5G65700">
    <property type="gene designation" value="BAM1"/>
</dbReference>
<dbReference type="eggNOG" id="ENOG502QQRQ">
    <property type="taxonomic scope" value="Eukaryota"/>
</dbReference>
<dbReference type="HOGENOM" id="CLU_000288_22_1_1"/>
<dbReference type="InParanoid" id="O49545"/>
<dbReference type="OMA" id="KDHHQPT"/>
<dbReference type="PhylomeDB" id="O49545"/>
<dbReference type="PRO" id="PR:O49545"/>
<dbReference type="Proteomes" id="UP000006548">
    <property type="component" value="Chromosome 5"/>
</dbReference>
<dbReference type="ExpressionAtlas" id="O49545">
    <property type="expression patterns" value="baseline and differential"/>
</dbReference>
<dbReference type="GO" id="GO:0005886">
    <property type="term" value="C:plasma membrane"/>
    <property type="evidence" value="ECO:0007005"/>
    <property type="project" value="TAIR"/>
</dbReference>
<dbReference type="GO" id="GO:0005524">
    <property type="term" value="F:ATP binding"/>
    <property type="evidence" value="ECO:0007669"/>
    <property type="project" value="UniProtKB-KW"/>
</dbReference>
<dbReference type="GO" id="GO:0042802">
    <property type="term" value="F:identical protein binding"/>
    <property type="evidence" value="ECO:0000353"/>
    <property type="project" value="IntAct"/>
</dbReference>
<dbReference type="GO" id="GO:0106310">
    <property type="term" value="F:protein serine kinase activity"/>
    <property type="evidence" value="ECO:0007669"/>
    <property type="project" value="RHEA"/>
</dbReference>
<dbReference type="GO" id="GO:0004674">
    <property type="term" value="F:protein serine/threonine kinase activity"/>
    <property type="evidence" value="ECO:0007669"/>
    <property type="project" value="UniProtKB-KW"/>
</dbReference>
<dbReference type="GO" id="GO:0033612">
    <property type="term" value="F:receptor serine/threonine kinase binding"/>
    <property type="evidence" value="ECO:0000353"/>
    <property type="project" value="UniProtKB"/>
</dbReference>
<dbReference type="GO" id="GO:0030154">
    <property type="term" value="P:cell differentiation"/>
    <property type="evidence" value="ECO:0007669"/>
    <property type="project" value="UniProtKB-KW"/>
</dbReference>
<dbReference type="GO" id="GO:0048437">
    <property type="term" value="P:floral organ development"/>
    <property type="evidence" value="ECO:0000316"/>
    <property type="project" value="TAIR"/>
</dbReference>
<dbReference type="GO" id="GO:0048229">
    <property type="term" value="P:gametophyte development"/>
    <property type="evidence" value="ECO:0000316"/>
    <property type="project" value="TAIR"/>
</dbReference>
<dbReference type="GO" id="GO:0010075">
    <property type="term" value="P:regulation of meristem growth"/>
    <property type="evidence" value="ECO:0000316"/>
    <property type="project" value="TAIR"/>
</dbReference>
<dbReference type="GO" id="GO:0009934">
    <property type="term" value="P:regulation of meristem structural organization"/>
    <property type="evidence" value="ECO:0000316"/>
    <property type="project" value="TAIR"/>
</dbReference>
<dbReference type="FunFam" id="1.10.510.10:FF:000201">
    <property type="entry name" value="Leucine-rich repeat receptor-like serine/threonine-protein kinase"/>
    <property type="match status" value="1"/>
</dbReference>
<dbReference type="FunFam" id="3.30.200.20:FF:000292">
    <property type="entry name" value="Leucine-rich repeat receptor-like serine/threonine-protein kinase BAM1"/>
    <property type="match status" value="1"/>
</dbReference>
<dbReference type="FunFam" id="3.80.10.10:FF:000570">
    <property type="entry name" value="Leucine-rich repeat receptor-like serine/threonine-protein kinase BAM1"/>
    <property type="match status" value="1"/>
</dbReference>
<dbReference type="FunFam" id="3.80.10.10:FF:000828">
    <property type="entry name" value="Leucine-rich repeat receptor-like serine/threonine-protein kinase BAM1"/>
    <property type="match status" value="1"/>
</dbReference>
<dbReference type="FunFam" id="3.80.10.10:FF:000108">
    <property type="entry name" value="Leucine-rich repeat receptor-like serine/threonine-protein kinase BAM3"/>
    <property type="match status" value="1"/>
</dbReference>
<dbReference type="Gene3D" id="3.30.200.20">
    <property type="entry name" value="Phosphorylase Kinase, domain 1"/>
    <property type="match status" value="1"/>
</dbReference>
<dbReference type="Gene3D" id="3.80.10.10">
    <property type="entry name" value="Ribonuclease Inhibitor"/>
    <property type="match status" value="3"/>
</dbReference>
<dbReference type="Gene3D" id="1.10.510.10">
    <property type="entry name" value="Transferase(Phosphotransferase) domain 1"/>
    <property type="match status" value="1"/>
</dbReference>
<dbReference type="InterPro" id="IPR011009">
    <property type="entry name" value="Kinase-like_dom_sf"/>
</dbReference>
<dbReference type="InterPro" id="IPR001611">
    <property type="entry name" value="Leu-rich_rpt"/>
</dbReference>
<dbReference type="InterPro" id="IPR003591">
    <property type="entry name" value="Leu-rich_rpt_typical-subtyp"/>
</dbReference>
<dbReference type="InterPro" id="IPR032675">
    <property type="entry name" value="LRR_dom_sf"/>
</dbReference>
<dbReference type="InterPro" id="IPR013210">
    <property type="entry name" value="LRR_N_plant-typ"/>
</dbReference>
<dbReference type="InterPro" id="IPR055414">
    <property type="entry name" value="LRR_R13L4/SHOC2-like"/>
</dbReference>
<dbReference type="InterPro" id="IPR051716">
    <property type="entry name" value="Plant_RL_S/T_kinase"/>
</dbReference>
<dbReference type="InterPro" id="IPR000719">
    <property type="entry name" value="Prot_kinase_dom"/>
</dbReference>
<dbReference type="InterPro" id="IPR008271">
    <property type="entry name" value="Ser/Thr_kinase_AS"/>
</dbReference>
<dbReference type="PANTHER" id="PTHR48053">
    <property type="entry name" value="LEUCINE RICH REPEAT FAMILY PROTEIN, EXPRESSED"/>
    <property type="match status" value="1"/>
</dbReference>
<dbReference type="PANTHER" id="PTHR48053:SF107">
    <property type="entry name" value="LEUCINE-RICH REPEAT RECEPTOR-LIKE SERINE_THREONINE-PROTEIN KINASE BAM1"/>
    <property type="match status" value="1"/>
</dbReference>
<dbReference type="Pfam" id="PF00560">
    <property type="entry name" value="LRR_1"/>
    <property type="match status" value="7"/>
</dbReference>
<dbReference type="Pfam" id="PF23598">
    <property type="entry name" value="LRR_14"/>
    <property type="match status" value="1"/>
</dbReference>
<dbReference type="Pfam" id="PF08263">
    <property type="entry name" value="LRRNT_2"/>
    <property type="match status" value="1"/>
</dbReference>
<dbReference type="Pfam" id="PF00069">
    <property type="entry name" value="Pkinase"/>
    <property type="match status" value="1"/>
</dbReference>
<dbReference type="SMART" id="SM00369">
    <property type="entry name" value="LRR_TYP"/>
    <property type="match status" value="7"/>
</dbReference>
<dbReference type="SMART" id="SM00220">
    <property type="entry name" value="S_TKc"/>
    <property type="match status" value="1"/>
</dbReference>
<dbReference type="SUPFAM" id="SSF52058">
    <property type="entry name" value="L domain-like"/>
    <property type="match status" value="1"/>
</dbReference>
<dbReference type="SUPFAM" id="SSF56112">
    <property type="entry name" value="Protein kinase-like (PK-like)"/>
    <property type="match status" value="1"/>
</dbReference>
<dbReference type="SUPFAM" id="SSF52047">
    <property type="entry name" value="RNI-like"/>
    <property type="match status" value="1"/>
</dbReference>
<dbReference type="PROSITE" id="PS50011">
    <property type="entry name" value="PROTEIN_KINASE_DOM"/>
    <property type="match status" value="1"/>
</dbReference>
<dbReference type="PROSITE" id="PS00108">
    <property type="entry name" value="PROTEIN_KINASE_ST"/>
    <property type="match status" value="1"/>
</dbReference>
<organism>
    <name type="scientific">Arabidopsis thaliana</name>
    <name type="common">Mouse-ear cress</name>
    <dbReference type="NCBI Taxonomy" id="3702"/>
    <lineage>
        <taxon>Eukaryota</taxon>
        <taxon>Viridiplantae</taxon>
        <taxon>Streptophyta</taxon>
        <taxon>Embryophyta</taxon>
        <taxon>Tracheophyta</taxon>
        <taxon>Spermatophyta</taxon>
        <taxon>Magnoliopsida</taxon>
        <taxon>eudicotyledons</taxon>
        <taxon>Gunneridae</taxon>
        <taxon>Pentapetalae</taxon>
        <taxon>rosids</taxon>
        <taxon>malvids</taxon>
        <taxon>Brassicales</taxon>
        <taxon>Brassicaceae</taxon>
        <taxon>Camelineae</taxon>
        <taxon>Arabidopsis</taxon>
    </lineage>
</organism>
<accession>O49545</accession>
<gene>
    <name type="primary">BAM1</name>
    <name type="ordered locus">At5g65700</name>
    <name type="ORF">F6H11.170</name>
    <name type="ORF">MPA24.5</name>
</gene>
<evidence type="ECO:0000250" key="1">
    <source>
        <dbReference type="UniProtKB" id="C0LGT6"/>
    </source>
</evidence>
<evidence type="ECO:0000250" key="2">
    <source>
        <dbReference type="UniProtKB" id="O22476"/>
    </source>
</evidence>
<evidence type="ECO:0000250" key="3">
    <source>
        <dbReference type="UniProtKB" id="Q9M0G7"/>
    </source>
</evidence>
<evidence type="ECO:0000255" key="4"/>
<evidence type="ECO:0000255" key="5">
    <source>
        <dbReference type="PROSITE-ProRule" id="PRU00159"/>
    </source>
</evidence>
<evidence type="ECO:0000255" key="6">
    <source>
        <dbReference type="PROSITE-ProRule" id="PRU10027"/>
    </source>
</evidence>
<evidence type="ECO:0000256" key="7">
    <source>
        <dbReference type="SAM" id="MobiDB-lite"/>
    </source>
</evidence>
<evidence type="ECO:0000269" key="8">
    <source>
    </source>
</evidence>
<evidence type="ECO:0000269" key="9">
    <source>
    </source>
</evidence>
<evidence type="ECO:0000269" key="10">
    <source>
    </source>
</evidence>
<evidence type="ECO:0000269" key="11">
    <source>
    </source>
</evidence>
<evidence type="ECO:0000269" key="12">
    <source>
    </source>
</evidence>
<evidence type="ECO:0007744" key="13">
    <source>
    </source>
</evidence>
<sequence length="1003" mass="109203">MKLFLLLLFLLHISHTFTASRPISEFRALLSLKTSLTGAGDDKNSPLSSWKVSTSFCTWIGVTCDVSRRHVTSLDLSGLNLSGTLSPDVSHLRLLQNLSLAENLISGPIPPEISSLSGLRHLNLSNNVFNGSFPDEISSGLVNLRVLDVYNNNLTGDLPVSVTNLTQLRHLHLGGNYFAGKIPPSYGSWPVIEYLAVSGNELVGKIPPEIGNLTTLRELYIGYYNAFEDGLPPEIGNLSELVRFDGANCGLTGEIPPEIGKLQKLDTLFLQVNVFSGPLTWELGTLSSLKSMDLSNNMFTGEIPASFAELKNLTLLNLFRNKLHGEIPEFIGDLPELEVLQLWENNFTGSIPQKLGENGKLNLVDLSSNKLTGTLPPNMCSGNKLETLITLGNFLFGSIPDSLGKCESLTRIRMGENFLNGSIPKGLFGLPKLTQVELQDNYLSGELPVAGGVSVNLGQISLSNNQLSGPLPPAIGNFTGVQKLLLDGNKFQGPIPSEVGKLQQLSKIDFSHNLFSGRIAPEISRCKLLTFVDLSRNELSGEIPNEITAMKILNYLNLSRNHLVGSIPGSISSMQSLTSLDFSYNNLSGLVPGTGQFSYFNYTSFLGNPDLCGPYLGPCKDGVAKGGHQSHSKGPLSASMKLLLVLGLLVCSIAFAVVAIIKARSLKKASESRAWRLTAFQRLDFTCDDVLDSLKEDNIIGKGGAGIVYKGVMPNGDLVAVKRLAAMSRGSSHDHGFNAEIQTLGRIRHRHIVRLLGFCSNHETNLLVYEYMPNGSLGEVLHGKKGGHLHWDTRYKIALEAAKGLCYLHHDCSPLIVHRDVKSNNILLDSNFEAHVADFGLAKFLQDSGTSECMSAIAGSYGYIAPEYAYTLKVDEKSDVYSFGVVLLELVTGRKPVGEFGDGVDIVQWVRKMTDSNKDSVLKVLDPRLSSIPIHEVTHVFYVAMLCVEEQAVERPTMREVVQILTEIPKLPPSKDQPMTESAPESELSPKSGVQSPPDLLNL</sequence>
<feature type="signal peptide" evidence="4">
    <location>
        <begin position="1"/>
        <end position="19"/>
    </location>
</feature>
<feature type="chain" id="PRO_0000403352" description="Leucine-rich repeat receptor-like serine/threonine-protein kinase BAM1">
    <location>
        <begin position="20"/>
        <end position="1003"/>
    </location>
</feature>
<feature type="topological domain" description="Extracellular" evidence="4">
    <location>
        <begin position="20"/>
        <end position="640"/>
    </location>
</feature>
<feature type="transmembrane region" description="Helical" evidence="4">
    <location>
        <begin position="641"/>
        <end position="661"/>
    </location>
</feature>
<feature type="topological domain" description="Cytoplasmic" evidence="4">
    <location>
        <begin position="662"/>
        <end position="1003"/>
    </location>
</feature>
<feature type="repeat" description="LRR 1">
    <location>
        <begin position="68"/>
        <end position="92"/>
    </location>
</feature>
<feature type="repeat" description="LRR 2">
    <location>
        <begin position="93"/>
        <end position="116"/>
    </location>
</feature>
<feature type="repeat" description="LRR 3">
    <location>
        <begin position="117"/>
        <end position="140"/>
    </location>
</feature>
<feature type="repeat" description="LRR 4">
    <location>
        <begin position="142"/>
        <end position="165"/>
    </location>
</feature>
<feature type="repeat" description="LRR 5">
    <location>
        <begin position="166"/>
        <end position="191"/>
    </location>
</feature>
<feature type="repeat" description="LRR 6">
    <location>
        <begin position="193"/>
        <end position="213"/>
    </location>
</feature>
<feature type="repeat" description="LRR 7">
    <location>
        <begin position="215"/>
        <end position="238"/>
    </location>
</feature>
<feature type="repeat" description="LRR 8">
    <location>
        <begin position="239"/>
        <end position="262"/>
    </location>
</feature>
<feature type="repeat" description="LRR 9">
    <location>
        <begin position="263"/>
        <end position="285"/>
    </location>
</feature>
<feature type="repeat" description="LRR 10">
    <location>
        <begin position="286"/>
        <end position="310"/>
    </location>
</feature>
<feature type="repeat" description="LRR 11">
    <location>
        <begin position="312"/>
        <end position="334"/>
    </location>
</feature>
<feature type="repeat" description="LRR 12">
    <location>
        <begin position="335"/>
        <end position="358"/>
    </location>
</feature>
<feature type="repeat" description="LRR 13">
    <location>
        <begin position="359"/>
        <end position="382"/>
    </location>
</feature>
<feature type="repeat" description="LRR 14">
    <location>
        <begin position="385"/>
        <end position="406"/>
    </location>
</feature>
<feature type="repeat" description="LRR 15">
    <location>
        <begin position="407"/>
        <end position="430"/>
    </location>
</feature>
<feature type="repeat" description="LRR 16">
    <location>
        <begin position="432"/>
        <end position="454"/>
    </location>
</feature>
<feature type="repeat" description="LRR 17">
    <location>
        <begin position="455"/>
        <end position="480"/>
    </location>
</feature>
<feature type="repeat" description="LRR 18">
    <location>
        <begin position="482"/>
        <end position="502"/>
    </location>
</feature>
<feature type="repeat" description="LRR 19">
    <location>
        <begin position="503"/>
        <end position="526"/>
    </location>
</feature>
<feature type="repeat" description="LRR 20">
    <location>
        <begin position="527"/>
        <end position="550"/>
    </location>
</feature>
<feature type="repeat" description="LRR 21">
    <location>
        <begin position="551"/>
        <end position="574"/>
    </location>
</feature>
<feature type="repeat" description="LRR 22">
    <location>
        <begin position="575"/>
        <end position="598"/>
    </location>
</feature>
<feature type="domain" description="Protein kinase" evidence="5">
    <location>
        <begin position="694"/>
        <end position="971"/>
    </location>
</feature>
<feature type="region of interest" description="Disordered" evidence="7">
    <location>
        <begin position="969"/>
        <end position="1003"/>
    </location>
</feature>
<feature type="active site" description="Proton acceptor" evidence="5 6">
    <location>
        <position position="820"/>
    </location>
</feature>
<feature type="binding site" evidence="5">
    <location>
        <begin position="700"/>
        <end position="708"/>
    </location>
    <ligand>
        <name>ATP</name>
        <dbReference type="ChEBI" id="CHEBI:30616"/>
    </ligand>
</feature>
<feature type="binding site" evidence="5">
    <location>
        <position position="722"/>
    </location>
    <ligand>
        <name>ATP</name>
        <dbReference type="ChEBI" id="CHEBI:30616"/>
    </ligand>
</feature>
<feature type="modified residue" description="Phosphothreonine" evidence="2">
    <location>
        <position position="686"/>
    </location>
</feature>
<feature type="modified residue" description="Phosphotyrosine" evidence="2">
    <location>
        <position position="769"/>
    </location>
</feature>
<feature type="modified residue" description="Phosphotyrosine" evidence="1">
    <location>
        <position position="807"/>
    </location>
</feature>
<feature type="modified residue" description="Phosphoserine" evidence="3">
    <location>
        <position position="855"/>
    </location>
</feature>
<feature type="modified residue" description="Phosphotyrosine" evidence="1">
    <location>
        <position position="863"/>
    </location>
</feature>
<feature type="modified residue" description="Phosphotyrosine" evidence="3">
    <location>
        <position position="870"/>
    </location>
</feature>
<feature type="modified residue" description="Phosphothreonine" evidence="3">
    <location>
        <position position="871"/>
    </location>
</feature>
<feature type="modified residue" description="Phosphoserine" evidence="13">
    <location>
        <position position="996"/>
    </location>
</feature>
<feature type="glycosylation site" description="N-linked (GlcNAc...) asparagine" evidence="4">
    <location>
        <position position="80"/>
    </location>
</feature>
<feature type="glycosylation site" description="N-linked (GlcNAc...) asparagine" evidence="4">
    <location>
        <position position="97"/>
    </location>
</feature>
<feature type="glycosylation site" description="N-linked (GlcNAc...) asparagine" evidence="4">
    <location>
        <position position="123"/>
    </location>
</feature>
<feature type="glycosylation site" description="N-linked (GlcNAc...) asparagine" evidence="4">
    <location>
        <position position="130"/>
    </location>
</feature>
<feature type="glycosylation site" description="N-linked (GlcNAc...) asparagine" evidence="4">
    <location>
        <position position="153"/>
    </location>
</feature>
<feature type="glycosylation site" description="N-linked (GlcNAc...) asparagine" evidence="4">
    <location>
        <position position="164"/>
    </location>
</feature>
<feature type="glycosylation site" description="N-linked (GlcNAc...) asparagine" evidence="4">
    <location>
        <position position="212"/>
    </location>
</feature>
<feature type="glycosylation site" description="N-linked (GlcNAc...) asparagine" evidence="4">
    <location>
        <position position="237"/>
    </location>
</feature>
<feature type="glycosylation site" description="N-linked (GlcNAc...) asparagine" evidence="4">
    <location>
        <position position="312"/>
    </location>
</feature>
<feature type="glycosylation site" description="N-linked (GlcNAc...) asparagine" evidence="4">
    <location>
        <position position="346"/>
    </location>
</feature>
<feature type="glycosylation site" description="N-linked (GlcNAc...) asparagine" evidence="4">
    <location>
        <position position="420"/>
    </location>
</feature>
<feature type="glycosylation site" description="N-linked (GlcNAc...) asparagine" evidence="4">
    <location>
        <position position="477"/>
    </location>
</feature>
<feature type="glycosylation site" description="N-linked (GlcNAc...) asparagine" evidence="4">
    <location>
        <position position="557"/>
    </location>
</feature>
<feature type="glycosylation site" description="N-linked (GlcNAc...) asparagine" evidence="4">
    <location>
        <position position="586"/>
    </location>
</feature>
<feature type="glycosylation site" description="N-linked (GlcNAc...) asparagine" evidence="4">
    <location>
        <position position="601"/>
    </location>
</feature>
<keyword id="KW-0067">ATP-binding</keyword>
<keyword id="KW-1003">Cell membrane</keyword>
<keyword id="KW-0217">Developmental protein</keyword>
<keyword id="KW-0221">Differentiation</keyword>
<keyword id="KW-0325">Glycoprotein</keyword>
<keyword id="KW-0418">Kinase</keyword>
<keyword id="KW-0433">Leucine-rich repeat</keyword>
<keyword id="KW-0472">Membrane</keyword>
<keyword id="KW-0547">Nucleotide-binding</keyword>
<keyword id="KW-0597">Phosphoprotein</keyword>
<keyword id="KW-0675">Receptor</keyword>
<keyword id="KW-1185">Reference proteome</keyword>
<keyword id="KW-0677">Repeat</keyword>
<keyword id="KW-0723">Serine/threonine-protein kinase</keyword>
<keyword id="KW-0732">Signal</keyword>
<keyword id="KW-0808">Transferase</keyword>
<keyword id="KW-0812">Transmembrane</keyword>
<keyword id="KW-1133">Transmembrane helix</keyword>
<name>BAME1_ARATH</name>
<proteinExistence type="evidence at protein level"/>
<comment type="function">
    <text evidence="9 10 11">Necessary for male gametophyte development, as well as ovule specification and function. Involved in cell-cell communication process required during early anther development, and regulating cell division and differentiation to organize cell layers. Required for the development of high-ordered vascular strands within the leaf and a correlated control of leaf shape, size and symmetry. May regulate the CLV1-dependent CLV3-mediated signaling in meristems maintenance.</text>
</comment>
<comment type="catalytic activity">
    <reaction>
        <text>L-seryl-[protein] + ATP = O-phospho-L-seryl-[protein] + ADP + H(+)</text>
        <dbReference type="Rhea" id="RHEA:17989"/>
        <dbReference type="Rhea" id="RHEA-COMP:9863"/>
        <dbReference type="Rhea" id="RHEA-COMP:11604"/>
        <dbReference type="ChEBI" id="CHEBI:15378"/>
        <dbReference type="ChEBI" id="CHEBI:29999"/>
        <dbReference type="ChEBI" id="CHEBI:30616"/>
        <dbReference type="ChEBI" id="CHEBI:83421"/>
        <dbReference type="ChEBI" id="CHEBI:456216"/>
        <dbReference type="EC" id="2.7.11.1"/>
    </reaction>
</comment>
<comment type="catalytic activity">
    <reaction>
        <text>L-threonyl-[protein] + ATP = O-phospho-L-threonyl-[protein] + ADP + H(+)</text>
        <dbReference type="Rhea" id="RHEA:46608"/>
        <dbReference type="Rhea" id="RHEA-COMP:11060"/>
        <dbReference type="Rhea" id="RHEA-COMP:11605"/>
        <dbReference type="ChEBI" id="CHEBI:15378"/>
        <dbReference type="ChEBI" id="CHEBI:30013"/>
        <dbReference type="ChEBI" id="CHEBI:30616"/>
        <dbReference type="ChEBI" id="CHEBI:61977"/>
        <dbReference type="ChEBI" id="CHEBI:456216"/>
        <dbReference type="EC" id="2.7.11.1"/>
    </reaction>
</comment>
<comment type="subunit">
    <text evidence="12">Self-interacts and interacts with BAM2 and CLV1. Binds to the CLV3, CLE5, CLE11, CLE18, CLE19, CLE22, CLE25, CLE26, CLE40, CLE41 and CLE42 mature peptides, probably via its extracellular leucine-rich repeat region.</text>
</comment>
<comment type="interaction">
    <interactant intactId="EBI-17069471">
        <id>O49545</id>
    </interactant>
    <interactant intactId="EBI-20654598">
        <id>F4I065</id>
        <label>At1g49100</label>
    </interactant>
    <organismsDiffer>false</organismsDiffer>
    <experiments>2</experiments>
</comment>
<comment type="interaction">
    <interactant intactId="EBI-17069471">
        <id>O49545</id>
    </interactant>
    <interactant intactId="EBI-20654045">
        <id>A0A1I9LQ53</id>
        <label>At3g50230</label>
    </interactant>
    <organismsDiffer>false</organismsDiffer>
    <experiments>3</experiments>
</comment>
<comment type="interaction">
    <interactant intactId="EBI-17069471">
        <id>O49545</id>
    </interactant>
    <interactant intactId="EBI-17069471">
        <id>O49545</id>
        <label>BAM1</label>
    </interactant>
    <organismsDiffer>false</organismsDiffer>
    <experiments>2</experiments>
</comment>
<comment type="interaction">
    <interactant intactId="EBI-17069471">
        <id>O49545</id>
    </interactant>
    <interactant intactId="EBI-20651413">
        <id>Q9LJF3</id>
        <label>BRL3</label>
    </interactant>
    <organismsDiffer>false</organismsDiffer>
    <experiments>2</experiments>
</comment>
<comment type="interaction">
    <interactant intactId="EBI-17069471">
        <id>O49545</id>
    </interactant>
    <interactant intactId="EBI-16914248">
        <id>C0LGW6</id>
        <label>ERL1</label>
    </interactant>
    <organismsDiffer>false</organismsDiffer>
    <experiments>2</experiments>
</comment>
<comment type="interaction">
    <interactant intactId="EBI-17069471">
        <id>O49545</id>
    </interactant>
    <interactant intactId="EBI-16887796">
        <id>O64794</id>
        <label>F12B7.6</label>
    </interactant>
    <organismsDiffer>false</organismsDiffer>
    <experiments>2</experiments>
</comment>
<comment type="subcellular location">
    <subcellularLocation>
        <location evidence="8 12">Cell membrane</location>
        <topology evidence="8 12">Single-pass type I membrane protein</topology>
    </subcellularLocation>
</comment>
<comment type="tissue specificity">
    <text evidence="9">Expressed in seedlings, roots, leaves, inflorescences, flowers and siliques.</text>
</comment>
<comment type="developmental stage">
    <text evidence="9 10">Expressed in a ring surrounding the center of meristems extended in the cortex of developing stems and older pedicels. Present in all developing floral organs, especially in anthers and gynoecium. Observed in anthers at stage 2 in the archesporial cells. At stage 3, localized in the primary sporogenous and primary parietal cells. Subsequently preferentially expressed in the sporogenous cells at anther stage 4. Later restricted to the tapetum and pollen mother cells (PMCs) before disappearing progressively.</text>
</comment>
<comment type="disruption phenotype">
    <text evidence="9 10 11">Rescues partially CLV3 disruption. When associated with BAM2 disruption, abnormal anthers at a very early stage and later lack of endothecium, middle and tapetum layers. Loss of stem cells at the shoot and flower meristems.</text>
</comment>
<comment type="similarity">
    <text evidence="5">Belongs to the protein kinase superfamily. Ser/Thr protein kinase family.</text>
</comment>
<reference key="1">
    <citation type="journal article" date="1998" name="DNA Res.">
        <title>Structural analysis of Arabidopsis thaliana chromosome 5. IV. Sequence features of the regions of 1,456,315 bp covered by nineteen physically assigned P1 and TAC clones.</title>
        <authorList>
            <person name="Sato S."/>
            <person name="Kaneko T."/>
            <person name="Kotani H."/>
            <person name="Nakamura Y."/>
            <person name="Asamizu E."/>
            <person name="Miyajima N."/>
            <person name="Tabata S."/>
        </authorList>
    </citation>
    <scope>NUCLEOTIDE SEQUENCE [LARGE SCALE GENOMIC DNA]</scope>
    <source>
        <strain>cv. Columbia</strain>
    </source>
</reference>
<reference key="2">
    <citation type="journal article" date="2000" name="Nature">
        <title>Sequence and analysis of chromosome 5 of the plant Arabidopsis thaliana.</title>
        <authorList>
            <person name="Tabata S."/>
            <person name="Kaneko T."/>
            <person name="Nakamura Y."/>
            <person name="Kotani H."/>
            <person name="Kato T."/>
            <person name="Asamizu E."/>
            <person name="Miyajima N."/>
            <person name="Sasamoto S."/>
            <person name="Kimura T."/>
            <person name="Hosouchi T."/>
            <person name="Kawashima K."/>
            <person name="Kohara M."/>
            <person name="Matsumoto M."/>
            <person name="Matsuno A."/>
            <person name="Muraki A."/>
            <person name="Nakayama S."/>
            <person name="Nakazaki N."/>
            <person name="Naruo K."/>
            <person name="Okumura S."/>
            <person name="Shinpo S."/>
            <person name="Takeuchi C."/>
            <person name="Wada T."/>
            <person name="Watanabe A."/>
            <person name="Yamada M."/>
            <person name="Yasuda M."/>
            <person name="Sato S."/>
            <person name="de la Bastide M."/>
            <person name="Huang E."/>
            <person name="Spiegel L."/>
            <person name="Gnoj L."/>
            <person name="O'Shaughnessy A."/>
            <person name="Preston R."/>
            <person name="Habermann K."/>
            <person name="Murray J."/>
            <person name="Johnson D."/>
            <person name="Rohlfing T."/>
            <person name="Nelson J."/>
            <person name="Stoneking T."/>
            <person name="Pepin K."/>
            <person name="Spieth J."/>
            <person name="Sekhon M."/>
            <person name="Armstrong J."/>
            <person name="Becker M."/>
            <person name="Belter E."/>
            <person name="Cordum H."/>
            <person name="Cordes M."/>
            <person name="Courtney L."/>
            <person name="Courtney W."/>
            <person name="Dante M."/>
            <person name="Du H."/>
            <person name="Edwards J."/>
            <person name="Fryman J."/>
            <person name="Haakensen B."/>
            <person name="Lamar E."/>
            <person name="Latreille P."/>
            <person name="Leonard S."/>
            <person name="Meyer R."/>
            <person name="Mulvaney E."/>
            <person name="Ozersky P."/>
            <person name="Riley A."/>
            <person name="Strowmatt C."/>
            <person name="Wagner-McPherson C."/>
            <person name="Wollam A."/>
            <person name="Yoakum M."/>
            <person name="Bell M."/>
            <person name="Dedhia N."/>
            <person name="Parnell L."/>
            <person name="Shah R."/>
            <person name="Rodriguez M."/>
            <person name="Hoon See L."/>
            <person name="Vil D."/>
            <person name="Baker J."/>
            <person name="Kirchoff K."/>
            <person name="Toth K."/>
            <person name="King L."/>
            <person name="Bahret A."/>
            <person name="Miller B."/>
            <person name="Marra M.A."/>
            <person name="Martienssen R."/>
            <person name="McCombie W.R."/>
            <person name="Wilson R.K."/>
            <person name="Murphy G."/>
            <person name="Bancroft I."/>
            <person name="Volckaert G."/>
            <person name="Wambutt R."/>
            <person name="Duesterhoeft A."/>
            <person name="Stiekema W."/>
            <person name="Pohl T."/>
            <person name="Entian K.-D."/>
            <person name="Terryn N."/>
            <person name="Hartley N."/>
            <person name="Bent E."/>
            <person name="Johnson S."/>
            <person name="Langham S.-A."/>
            <person name="McCullagh B."/>
            <person name="Robben J."/>
            <person name="Grymonprez B."/>
            <person name="Zimmermann W."/>
            <person name="Ramsperger U."/>
            <person name="Wedler H."/>
            <person name="Balke K."/>
            <person name="Wedler E."/>
            <person name="Peters S."/>
            <person name="van Staveren M."/>
            <person name="Dirkse W."/>
            <person name="Mooijman P."/>
            <person name="Klein Lankhorst R."/>
            <person name="Weitzenegger T."/>
            <person name="Bothe G."/>
            <person name="Rose M."/>
            <person name="Hauf J."/>
            <person name="Berneiser S."/>
            <person name="Hempel S."/>
            <person name="Feldpausch M."/>
            <person name="Lamberth S."/>
            <person name="Villarroel R."/>
            <person name="Gielen J."/>
            <person name="Ardiles W."/>
            <person name="Bents O."/>
            <person name="Lemcke K."/>
            <person name="Kolesov G."/>
            <person name="Mayer K.F.X."/>
            <person name="Rudd S."/>
            <person name="Schoof H."/>
            <person name="Schueller C."/>
            <person name="Zaccaria P."/>
            <person name="Mewes H.-W."/>
            <person name="Bevan M."/>
            <person name="Fransz P.F."/>
        </authorList>
    </citation>
    <scope>NUCLEOTIDE SEQUENCE [LARGE SCALE GENOMIC DNA]</scope>
    <source>
        <strain>cv. Columbia</strain>
    </source>
</reference>
<reference key="3">
    <citation type="journal article" date="2017" name="Plant J.">
        <title>Araport11: a complete reannotation of the Arabidopsis thaliana reference genome.</title>
        <authorList>
            <person name="Cheng C.Y."/>
            <person name="Krishnakumar V."/>
            <person name="Chan A.P."/>
            <person name="Thibaud-Nissen F."/>
            <person name="Schobel S."/>
            <person name="Town C.D."/>
        </authorList>
    </citation>
    <scope>GENOME REANNOTATION</scope>
    <source>
        <strain>cv. Columbia</strain>
    </source>
</reference>
<reference key="4">
    <citation type="journal article" date="2003" name="Science">
        <title>Empirical analysis of transcriptional activity in the Arabidopsis genome.</title>
        <authorList>
            <person name="Yamada K."/>
            <person name="Lim J."/>
            <person name="Dale J.M."/>
            <person name="Chen H."/>
            <person name="Shinn P."/>
            <person name="Palm C.J."/>
            <person name="Southwick A.M."/>
            <person name="Wu H.C."/>
            <person name="Kim C.J."/>
            <person name="Nguyen M."/>
            <person name="Pham P.K."/>
            <person name="Cheuk R.F."/>
            <person name="Karlin-Newmann G."/>
            <person name="Liu S.X."/>
            <person name="Lam B."/>
            <person name="Sakano H."/>
            <person name="Wu T."/>
            <person name="Yu G."/>
            <person name="Miranda M."/>
            <person name="Quach H.L."/>
            <person name="Tripp M."/>
            <person name="Chang C.H."/>
            <person name="Lee J.M."/>
            <person name="Toriumi M.J."/>
            <person name="Chan M.M."/>
            <person name="Tang C.C."/>
            <person name="Onodera C.S."/>
            <person name="Deng J.M."/>
            <person name="Akiyama K."/>
            <person name="Ansari Y."/>
            <person name="Arakawa T."/>
            <person name="Banh J."/>
            <person name="Banno F."/>
            <person name="Bowser L."/>
            <person name="Brooks S.Y."/>
            <person name="Carninci P."/>
            <person name="Chao Q."/>
            <person name="Choy N."/>
            <person name="Enju A."/>
            <person name="Goldsmith A.D."/>
            <person name="Gurjal M."/>
            <person name="Hansen N.F."/>
            <person name="Hayashizaki Y."/>
            <person name="Johnson-Hopson C."/>
            <person name="Hsuan V.W."/>
            <person name="Iida K."/>
            <person name="Karnes M."/>
            <person name="Khan S."/>
            <person name="Koesema E."/>
            <person name="Ishida J."/>
            <person name="Jiang P.X."/>
            <person name="Jones T."/>
            <person name="Kawai J."/>
            <person name="Kamiya A."/>
            <person name="Meyers C."/>
            <person name="Nakajima M."/>
            <person name="Narusaka M."/>
            <person name="Seki M."/>
            <person name="Sakurai T."/>
            <person name="Satou M."/>
            <person name="Tamse R."/>
            <person name="Vaysberg M."/>
            <person name="Wallender E.K."/>
            <person name="Wong C."/>
            <person name="Yamamura Y."/>
            <person name="Yuan S."/>
            <person name="Shinozaki K."/>
            <person name="Davis R.W."/>
            <person name="Theologis A."/>
            <person name="Ecker J.R."/>
        </authorList>
    </citation>
    <scope>NUCLEOTIDE SEQUENCE [LARGE SCALE MRNA]</scope>
    <source>
        <strain>cv. Columbia</strain>
    </source>
</reference>
<reference key="5">
    <citation type="journal article" date="2010" name="BMC Genomics">
        <title>Genome-wide cloning and sequence analysis of leucine-rich repeat receptor-like protein kinase genes in Arabidopsis thaliana.</title>
        <authorList>
            <person name="Gou X."/>
            <person name="He K."/>
            <person name="Yang H."/>
            <person name="Yuan T."/>
            <person name="Lin H."/>
            <person name="Clouse S.D."/>
            <person name="Li J."/>
        </authorList>
    </citation>
    <scope>NUCLEOTIDE SEQUENCE [LARGE SCALE MRNA]</scope>
    <source>
        <strain>cv. Columbia</strain>
    </source>
</reference>
<reference key="6">
    <citation type="submission" date="2006-07" db="EMBL/GenBank/DDBJ databases">
        <title>Large-scale analysis of RIKEN Arabidopsis full-length (RAFL) cDNAs.</title>
        <authorList>
            <person name="Totoki Y."/>
            <person name="Seki M."/>
            <person name="Ishida J."/>
            <person name="Nakajima M."/>
            <person name="Enju A."/>
            <person name="Kamiya A."/>
            <person name="Narusaka M."/>
            <person name="Shin-i T."/>
            <person name="Nakagawa M."/>
            <person name="Sakamoto N."/>
            <person name="Oishi K."/>
            <person name="Kohara Y."/>
            <person name="Kobayashi M."/>
            <person name="Toyoda A."/>
            <person name="Sakaki Y."/>
            <person name="Sakurai T."/>
            <person name="Iida K."/>
            <person name="Akiyama K."/>
            <person name="Satou M."/>
            <person name="Toyoda T."/>
            <person name="Konagaya A."/>
            <person name="Carninci P."/>
            <person name="Kawai J."/>
            <person name="Hayashizaki Y."/>
            <person name="Shinozaki K."/>
        </authorList>
    </citation>
    <scope>NUCLEOTIDE SEQUENCE [LARGE SCALE MRNA]</scope>
    <source>
        <strain>cv. Columbia</strain>
    </source>
</reference>
<reference key="7">
    <citation type="journal article" date="2003" name="Mol. Cell. Proteomics">
        <title>Large-scale analysis of in vivo phosphorylated membrane proteins by immobilized metal ion affinity chromatography and mass spectrometry.</title>
        <authorList>
            <person name="Nuehse T.S."/>
            <person name="Stensballe A."/>
            <person name="Jensen O.N."/>
            <person name="Peck S.C."/>
        </authorList>
    </citation>
    <scope>SUBCELLULAR LOCATION</scope>
    <source>
        <strain>cv. La-0</strain>
    </source>
</reference>
<reference key="8">
    <citation type="journal article" date="2006" name="Plant Cell">
        <title>The BAM1/BAM2 receptor-like kinases are important regulators of Arabidopsis early anther development.</title>
        <authorList>
            <person name="Hord C.L.H."/>
            <person name="Chen C."/>
            <person name="Deyoung B.J."/>
            <person name="Clark S.E."/>
            <person name="Ma H."/>
        </authorList>
    </citation>
    <scope>FUNCTION</scope>
    <scope>DISRUPTION PHENOTYPE</scope>
    <scope>DEVELOPMENTAL STAGE</scope>
</reference>
<reference key="9">
    <citation type="journal article" date="2006" name="Plant J.">
        <title>The CLAVATA1-related BAM1, BAM2 and BAM3 receptor kinase-like proteins are required for meristem function in Arabidopsis.</title>
        <authorList>
            <person name="DeYoung B.J."/>
            <person name="Bickle K.L."/>
            <person name="Schrage K.J."/>
            <person name="Muskett P."/>
            <person name="Patel K."/>
            <person name="Clark S.E."/>
        </authorList>
    </citation>
    <scope>FUNCTION</scope>
    <scope>DISRUPTION PHENOTYPE</scope>
    <scope>TISSUE SPECIFICITY</scope>
    <scope>DEVELOPMENTAL STAGE</scope>
</reference>
<reference key="10">
    <citation type="journal article" date="2008" name="Genetics">
        <title>BAM receptors regulate stem cell specification and organ development through complex interactions with CLAVATA signaling.</title>
        <authorList>
            <person name="Deyoung B.J."/>
            <person name="Clark S.E."/>
        </authorList>
    </citation>
    <scope>DISRUPTION PHENOTYPE</scope>
    <scope>FUNCTION</scope>
</reference>
<reference key="11">
    <citation type="journal article" date="2009" name="Plant Physiol.">
        <title>Large-scale Arabidopsis phosphoproteome profiling reveals novel chloroplast kinase substrates and phosphorylation networks.</title>
        <authorList>
            <person name="Reiland S."/>
            <person name="Messerli G."/>
            <person name="Baerenfaller K."/>
            <person name="Gerrits B."/>
            <person name="Endler A."/>
            <person name="Grossmann J."/>
            <person name="Gruissem W."/>
            <person name="Baginsky S."/>
        </authorList>
    </citation>
    <scope>PHOSPHORYLATION [LARGE SCALE ANALYSIS] AT SER-996</scope>
    <scope>IDENTIFICATION BY MASS SPECTROMETRY [LARGE SCALE ANALYSIS]</scope>
</reference>
<reference key="12">
    <citation type="journal article" date="2010" name="Plant J.">
        <title>CLAVATA2 forms a distinct CLE-binding receptor complex regulating Arabidopsis stem cell specification.</title>
        <authorList>
            <person name="Guo Y."/>
            <person name="Han L."/>
            <person name="Hymes M."/>
            <person name="Denver R."/>
            <person name="Clark S.E."/>
        </authorList>
    </citation>
    <scope>INTERACTION WITH MCLV3; CLE5; CLE11; CLE18; CLE19; CLE22; CLE25; CLE26; CLE40; CLE41; CLE42; CLV1 AND BAM2</scope>
    <scope>HOMODIMERIZATION</scope>
    <scope>SUBCELLULAR LOCATION</scope>
</reference>
<protein>
    <recommendedName>
        <fullName>Leucine-rich repeat receptor-like serine/threonine-protein kinase BAM1</fullName>
        <ecNumber>2.7.11.1</ecNumber>
    </recommendedName>
    <alternativeName>
        <fullName>Protein BARELY ANY MERISTEM 1</fullName>
    </alternativeName>
</protein>